<keyword id="KW-0030">Aminoacyl-tRNA synthetase</keyword>
<keyword id="KW-0067">ATP-binding</keyword>
<keyword id="KW-0963">Cytoplasm</keyword>
<keyword id="KW-0436">Ligase</keyword>
<keyword id="KW-0547">Nucleotide-binding</keyword>
<keyword id="KW-0648">Protein biosynthesis</keyword>
<gene>
    <name evidence="1" type="primary">glnS</name>
    <name type="ordered locus">BB4013</name>
</gene>
<accession>Q7WGA6</accession>
<protein>
    <recommendedName>
        <fullName evidence="1">Glutamine--tRNA ligase</fullName>
        <ecNumber evidence="1">6.1.1.18</ecNumber>
    </recommendedName>
    <alternativeName>
        <fullName evidence="1">Glutaminyl-tRNA synthetase</fullName>
        <shortName evidence="1">GlnRS</shortName>
    </alternativeName>
</protein>
<evidence type="ECO:0000255" key="1">
    <source>
        <dbReference type="HAMAP-Rule" id="MF_00126"/>
    </source>
</evidence>
<dbReference type="EC" id="6.1.1.18" evidence="1"/>
<dbReference type="EMBL" id="BX640449">
    <property type="protein sequence ID" value="CAE34376.1"/>
    <property type="molecule type" value="Genomic_DNA"/>
</dbReference>
<dbReference type="RefSeq" id="WP_010927011.1">
    <property type="nucleotide sequence ID" value="NC_002927.3"/>
</dbReference>
<dbReference type="SMR" id="Q7WGA6"/>
<dbReference type="KEGG" id="bbr:BB4013"/>
<dbReference type="eggNOG" id="COG0008">
    <property type="taxonomic scope" value="Bacteria"/>
</dbReference>
<dbReference type="HOGENOM" id="CLU_001882_2_3_4"/>
<dbReference type="Proteomes" id="UP000001027">
    <property type="component" value="Chromosome"/>
</dbReference>
<dbReference type="GO" id="GO:0005829">
    <property type="term" value="C:cytosol"/>
    <property type="evidence" value="ECO:0007669"/>
    <property type="project" value="TreeGrafter"/>
</dbReference>
<dbReference type="GO" id="GO:0005524">
    <property type="term" value="F:ATP binding"/>
    <property type="evidence" value="ECO:0007669"/>
    <property type="project" value="UniProtKB-UniRule"/>
</dbReference>
<dbReference type="GO" id="GO:0004819">
    <property type="term" value="F:glutamine-tRNA ligase activity"/>
    <property type="evidence" value="ECO:0007669"/>
    <property type="project" value="UniProtKB-UniRule"/>
</dbReference>
<dbReference type="GO" id="GO:0006425">
    <property type="term" value="P:glutaminyl-tRNA aminoacylation"/>
    <property type="evidence" value="ECO:0007669"/>
    <property type="project" value="InterPro"/>
</dbReference>
<dbReference type="GO" id="GO:0006424">
    <property type="term" value="P:glutamyl-tRNA aminoacylation"/>
    <property type="evidence" value="ECO:0007669"/>
    <property type="project" value="UniProtKB-UniRule"/>
</dbReference>
<dbReference type="FunFam" id="3.40.50.620:FF:000037">
    <property type="entry name" value="Glutamine--tRNA ligase cytoplasmic"/>
    <property type="match status" value="1"/>
</dbReference>
<dbReference type="Gene3D" id="3.40.50.620">
    <property type="entry name" value="HUPs"/>
    <property type="match status" value="1"/>
</dbReference>
<dbReference type="Gene3D" id="2.40.240.10">
    <property type="entry name" value="Ribosomal Protein L25, Chain P"/>
    <property type="match status" value="2"/>
</dbReference>
<dbReference type="HAMAP" id="MF_00126">
    <property type="entry name" value="Gln_tRNA_synth"/>
    <property type="match status" value="1"/>
</dbReference>
<dbReference type="InterPro" id="IPR001412">
    <property type="entry name" value="aa-tRNA-synth_I_CS"/>
</dbReference>
<dbReference type="InterPro" id="IPR004514">
    <property type="entry name" value="Gln-tRNA-synth"/>
</dbReference>
<dbReference type="InterPro" id="IPR050132">
    <property type="entry name" value="Gln/Glu-tRNA_Ligase"/>
</dbReference>
<dbReference type="InterPro" id="IPR022861">
    <property type="entry name" value="Gln_tRNA_ligase_bac"/>
</dbReference>
<dbReference type="InterPro" id="IPR000924">
    <property type="entry name" value="Glu/Gln-tRNA-synth"/>
</dbReference>
<dbReference type="InterPro" id="IPR020058">
    <property type="entry name" value="Glu/Gln-tRNA-synth_Ib_cat-dom"/>
</dbReference>
<dbReference type="InterPro" id="IPR020059">
    <property type="entry name" value="Glu/Gln-tRNA-synth_Ib_codon-bd"/>
</dbReference>
<dbReference type="InterPro" id="IPR020056">
    <property type="entry name" value="Rbsml_bL25/Gln-tRNA_synth_N"/>
</dbReference>
<dbReference type="InterPro" id="IPR011035">
    <property type="entry name" value="Ribosomal_bL25/Gln-tRNA_synth"/>
</dbReference>
<dbReference type="InterPro" id="IPR014729">
    <property type="entry name" value="Rossmann-like_a/b/a_fold"/>
</dbReference>
<dbReference type="InterPro" id="IPR049437">
    <property type="entry name" value="tRNA-synt_1c_C2"/>
</dbReference>
<dbReference type="NCBIfam" id="TIGR00440">
    <property type="entry name" value="glnS"/>
    <property type="match status" value="1"/>
</dbReference>
<dbReference type="NCBIfam" id="NF011291">
    <property type="entry name" value="PRK14703.1"/>
    <property type="match status" value="1"/>
</dbReference>
<dbReference type="PANTHER" id="PTHR43097:SF5">
    <property type="entry name" value="GLUTAMATE--TRNA LIGASE"/>
    <property type="match status" value="1"/>
</dbReference>
<dbReference type="PANTHER" id="PTHR43097">
    <property type="entry name" value="GLUTAMINE-TRNA LIGASE"/>
    <property type="match status" value="1"/>
</dbReference>
<dbReference type="Pfam" id="PF00749">
    <property type="entry name" value="tRNA-synt_1c"/>
    <property type="match status" value="1"/>
</dbReference>
<dbReference type="Pfam" id="PF03950">
    <property type="entry name" value="tRNA-synt_1c_C"/>
    <property type="match status" value="1"/>
</dbReference>
<dbReference type="Pfam" id="PF20974">
    <property type="entry name" value="tRNA-synt_1c_C2"/>
    <property type="match status" value="1"/>
</dbReference>
<dbReference type="PRINTS" id="PR00987">
    <property type="entry name" value="TRNASYNTHGLU"/>
</dbReference>
<dbReference type="SUPFAM" id="SSF52374">
    <property type="entry name" value="Nucleotidylyl transferase"/>
    <property type="match status" value="1"/>
</dbReference>
<dbReference type="SUPFAM" id="SSF50715">
    <property type="entry name" value="Ribosomal protein L25-like"/>
    <property type="match status" value="1"/>
</dbReference>
<dbReference type="PROSITE" id="PS00178">
    <property type="entry name" value="AA_TRNA_LIGASE_I"/>
    <property type="match status" value="1"/>
</dbReference>
<comment type="catalytic activity">
    <reaction evidence="1">
        <text>tRNA(Gln) + L-glutamine + ATP = L-glutaminyl-tRNA(Gln) + AMP + diphosphate</text>
        <dbReference type="Rhea" id="RHEA:20121"/>
        <dbReference type="Rhea" id="RHEA-COMP:9662"/>
        <dbReference type="Rhea" id="RHEA-COMP:9681"/>
        <dbReference type="ChEBI" id="CHEBI:30616"/>
        <dbReference type="ChEBI" id="CHEBI:33019"/>
        <dbReference type="ChEBI" id="CHEBI:58359"/>
        <dbReference type="ChEBI" id="CHEBI:78442"/>
        <dbReference type="ChEBI" id="CHEBI:78521"/>
        <dbReference type="ChEBI" id="CHEBI:456215"/>
        <dbReference type="EC" id="6.1.1.18"/>
    </reaction>
</comment>
<comment type="subunit">
    <text evidence="1">Monomer.</text>
</comment>
<comment type="subcellular location">
    <subcellularLocation>
        <location evidence="1">Cytoplasm</location>
    </subcellularLocation>
</comment>
<comment type="similarity">
    <text evidence="1">Belongs to the class-I aminoacyl-tRNA synthetase family.</text>
</comment>
<feature type="chain" id="PRO_1000095479" description="Glutamine--tRNA ligase">
    <location>
        <begin position="1"/>
        <end position="587"/>
    </location>
</feature>
<feature type="short sequence motif" description="'HIGH' region" evidence="1">
    <location>
        <begin position="58"/>
        <end position="68"/>
    </location>
</feature>
<feature type="short sequence motif" description="'KMSKS' region" evidence="1">
    <location>
        <begin position="301"/>
        <end position="305"/>
    </location>
</feature>
<feature type="binding site" evidence="1">
    <location>
        <begin position="59"/>
        <end position="61"/>
    </location>
    <ligand>
        <name>ATP</name>
        <dbReference type="ChEBI" id="CHEBI:30616"/>
    </ligand>
</feature>
<feature type="binding site" evidence="1">
    <location>
        <begin position="65"/>
        <end position="71"/>
    </location>
    <ligand>
        <name>ATP</name>
        <dbReference type="ChEBI" id="CHEBI:30616"/>
    </ligand>
</feature>
<feature type="binding site" evidence="1">
    <location>
        <position position="91"/>
    </location>
    <ligand>
        <name>L-glutamine</name>
        <dbReference type="ChEBI" id="CHEBI:58359"/>
    </ligand>
</feature>
<feature type="binding site" evidence="1">
    <location>
        <position position="240"/>
    </location>
    <ligand>
        <name>L-glutamine</name>
        <dbReference type="ChEBI" id="CHEBI:58359"/>
    </ligand>
</feature>
<feature type="binding site" evidence="1">
    <location>
        <position position="259"/>
    </location>
    <ligand>
        <name>ATP</name>
        <dbReference type="ChEBI" id="CHEBI:30616"/>
    </ligand>
</feature>
<feature type="binding site" evidence="1">
    <location>
        <begin position="294"/>
        <end position="295"/>
    </location>
    <ligand>
        <name>ATP</name>
        <dbReference type="ChEBI" id="CHEBI:30616"/>
    </ligand>
</feature>
<reference key="1">
    <citation type="journal article" date="2003" name="Nat. Genet.">
        <title>Comparative analysis of the genome sequences of Bordetella pertussis, Bordetella parapertussis and Bordetella bronchiseptica.</title>
        <authorList>
            <person name="Parkhill J."/>
            <person name="Sebaihia M."/>
            <person name="Preston A."/>
            <person name="Murphy L.D."/>
            <person name="Thomson N.R."/>
            <person name="Harris D.E."/>
            <person name="Holden M.T.G."/>
            <person name="Churcher C.M."/>
            <person name="Bentley S.D."/>
            <person name="Mungall K.L."/>
            <person name="Cerdeno-Tarraga A.-M."/>
            <person name="Temple L."/>
            <person name="James K.D."/>
            <person name="Harris B."/>
            <person name="Quail M.A."/>
            <person name="Achtman M."/>
            <person name="Atkin R."/>
            <person name="Baker S."/>
            <person name="Basham D."/>
            <person name="Bason N."/>
            <person name="Cherevach I."/>
            <person name="Chillingworth T."/>
            <person name="Collins M."/>
            <person name="Cronin A."/>
            <person name="Davis P."/>
            <person name="Doggett J."/>
            <person name="Feltwell T."/>
            <person name="Goble A."/>
            <person name="Hamlin N."/>
            <person name="Hauser H."/>
            <person name="Holroyd S."/>
            <person name="Jagels K."/>
            <person name="Leather S."/>
            <person name="Moule S."/>
            <person name="Norberczak H."/>
            <person name="O'Neil S."/>
            <person name="Ormond D."/>
            <person name="Price C."/>
            <person name="Rabbinowitsch E."/>
            <person name="Rutter S."/>
            <person name="Sanders M."/>
            <person name="Saunders D."/>
            <person name="Seeger K."/>
            <person name="Sharp S."/>
            <person name="Simmonds M."/>
            <person name="Skelton J."/>
            <person name="Squares R."/>
            <person name="Squares S."/>
            <person name="Stevens K."/>
            <person name="Unwin L."/>
            <person name="Whitehead S."/>
            <person name="Barrell B.G."/>
            <person name="Maskell D.J."/>
        </authorList>
    </citation>
    <scope>NUCLEOTIDE SEQUENCE [LARGE SCALE GENOMIC DNA]</scope>
    <source>
        <strain>ATCC BAA-588 / NCTC 13252 / RB50</strain>
    </source>
</reference>
<name>SYQ_BORBR</name>
<proteinExistence type="inferred from homology"/>
<sequence length="587" mass="66607">MTHAPTPPAASNFLRPIIEDDLQANRFQGKLWAGKPGPAALQAQGQPDPARIRTRFPPEPNGYLHIGHAKSICVNFGLARDYGGVCHLRFDDTNPEKEEQEYVDAIIEAVHWLGFDWQADGNDNLYFASDYFEFMYEFAEALVQAGHAYVDEQSAEEIRASRGTLTEPGTDSPWRDRPADESLLRLREMRDGKHPDGSLVLRARIDMASPNINLRDPVMYRVRHATHHRTGNAWCIYPMYSWAHPVEDALEGITHSICTLEFEDQRPFYDWILARLAELGKLARPLPHQYEFARLNLTYVVTSKRKLLQLVREGYVDGWDDPRMPTLFGLRRRGYTPSSIRLFCDRTAVSKSDSRIDYSLLEQAVRDDLDPVAPRSVAVLDPLKLVITNYPEGRSETCSAPRNPHDPQAGVREFPFTRELWIEQDDFREEPPKKYFRLFPGNTVRLKYGYVVRCTGFTKDQSGKVVEVQAEYLPDTKSGTPGADSVKVKGNITWVSAAHAVPAQVHLYDRLFADAHPDGGDKDFLACLNPHSKQTVQAWLEPGIEAVPGATWQFERLGYFTVDSKDSRPEAPVLNRIVTLRDSWQAA</sequence>
<organism>
    <name type="scientific">Bordetella bronchiseptica (strain ATCC BAA-588 / NCTC 13252 / RB50)</name>
    <name type="common">Alcaligenes bronchisepticus</name>
    <dbReference type="NCBI Taxonomy" id="257310"/>
    <lineage>
        <taxon>Bacteria</taxon>
        <taxon>Pseudomonadati</taxon>
        <taxon>Pseudomonadota</taxon>
        <taxon>Betaproteobacteria</taxon>
        <taxon>Burkholderiales</taxon>
        <taxon>Alcaligenaceae</taxon>
        <taxon>Bordetella</taxon>
    </lineage>
</organism>